<comment type="function">
    <text evidence="1">Catalyzes the reduction of FMN to FMNH2 which is used to reduce pyrimidine by RutA via the Rut pathway.</text>
</comment>
<comment type="catalytic activity">
    <reaction evidence="1">
        <text>FMNH2 + NAD(+) = FMN + NADH + 2 H(+)</text>
        <dbReference type="Rhea" id="RHEA:21620"/>
        <dbReference type="ChEBI" id="CHEBI:15378"/>
        <dbReference type="ChEBI" id="CHEBI:57540"/>
        <dbReference type="ChEBI" id="CHEBI:57618"/>
        <dbReference type="ChEBI" id="CHEBI:57945"/>
        <dbReference type="ChEBI" id="CHEBI:58210"/>
        <dbReference type="EC" id="1.5.1.42"/>
    </reaction>
</comment>
<comment type="similarity">
    <text evidence="1">Belongs to the non-flavoprotein flavin reductase family. RutF subfamily.</text>
</comment>
<name>RUTF_SERP5</name>
<sequence length="175" mass="18930">MQSQTLLADTPLQSPYVEKQDFRDAMARLGSAVNIITTDGPAGRAGFTASAVCSVTDTPPTLLVCLNRSASVYSVFKQNQTLCVNTLAAEHESLSNLFGGKTPMELRFSAARWSTLATGSPILHGAVVSFDCQIGQIVSVGTHDIFFCQALALTRNDDSHGLAYFDRRYHSLLKQ</sequence>
<organism>
    <name type="scientific">Serratia proteamaculans (strain 568)</name>
    <dbReference type="NCBI Taxonomy" id="399741"/>
    <lineage>
        <taxon>Bacteria</taxon>
        <taxon>Pseudomonadati</taxon>
        <taxon>Pseudomonadota</taxon>
        <taxon>Gammaproteobacteria</taxon>
        <taxon>Enterobacterales</taxon>
        <taxon>Yersiniaceae</taxon>
        <taxon>Serratia</taxon>
    </lineage>
</organism>
<protein>
    <recommendedName>
        <fullName evidence="1">FMN reductase (NADH) RutF</fullName>
        <ecNumber evidence="1">1.5.1.42</ecNumber>
    </recommendedName>
    <alternativeName>
        <fullName evidence="1">FMN reductase</fullName>
    </alternativeName>
    <alternativeName>
        <fullName evidence="1">NADH-flavin reductase RutF</fullName>
    </alternativeName>
    <alternativeName>
        <fullName evidence="1">NADH:flavin oxidoreductase</fullName>
    </alternativeName>
</protein>
<accession>A8GCT2</accession>
<evidence type="ECO:0000255" key="1">
    <source>
        <dbReference type="HAMAP-Rule" id="MF_00833"/>
    </source>
</evidence>
<feature type="chain" id="PRO_0000403042" description="FMN reductase (NADH) RutF">
    <location>
        <begin position="1"/>
        <end position="175"/>
    </location>
</feature>
<proteinExistence type="inferred from homology"/>
<dbReference type="EC" id="1.5.1.42" evidence="1"/>
<dbReference type="EMBL" id="CP000826">
    <property type="protein sequence ID" value="ABV40922.1"/>
    <property type="molecule type" value="Genomic_DNA"/>
</dbReference>
<dbReference type="SMR" id="A8GCT2"/>
<dbReference type="STRING" id="399741.Spro_1819"/>
<dbReference type="KEGG" id="spe:Spro_1819"/>
<dbReference type="eggNOG" id="COG1853">
    <property type="taxonomic scope" value="Bacteria"/>
</dbReference>
<dbReference type="HOGENOM" id="CLU_059021_2_2_6"/>
<dbReference type="OrthoDB" id="6401628at2"/>
<dbReference type="GO" id="GO:0010181">
    <property type="term" value="F:FMN binding"/>
    <property type="evidence" value="ECO:0007669"/>
    <property type="project" value="InterPro"/>
</dbReference>
<dbReference type="GO" id="GO:0052874">
    <property type="term" value="F:FMN reductase (NADH) activity"/>
    <property type="evidence" value="ECO:0007669"/>
    <property type="project" value="UniProtKB-EC"/>
</dbReference>
<dbReference type="GO" id="GO:0008752">
    <property type="term" value="F:FMN reductase [NAD(P)H] activity"/>
    <property type="evidence" value="ECO:0007669"/>
    <property type="project" value="InterPro"/>
</dbReference>
<dbReference type="GO" id="GO:0042602">
    <property type="term" value="F:riboflavin reductase (NADPH) activity"/>
    <property type="evidence" value="ECO:0007669"/>
    <property type="project" value="UniProtKB-UniRule"/>
</dbReference>
<dbReference type="GO" id="GO:0019740">
    <property type="term" value="P:nitrogen utilization"/>
    <property type="evidence" value="ECO:0007669"/>
    <property type="project" value="UniProtKB-UniRule"/>
</dbReference>
<dbReference type="GO" id="GO:0006212">
    <property type="term" value="P:uracil catabolic process"/>
    <property type="evidence" value="ECO:0007669"/>
    <property type="project" value="UniProtKB-UniRule"/>
</dbReference>
<dbReference type="FunFam" id="2.30.110.10:FF:000002">
    <property type="entry name" value="FMN reductase (NADH) RutF"/>
    <property type="match status" value="1"/>
</dbReference>
<dbReference type="Gene3D" id="2.30.110.10">
    <property type="entry name" value="Electron Transport, Fmn-binding Protein, Chain A"/>
    <property type="match status" value="1"/>
</dbReference>
<dbReference type="HAMAP" id="MF_00833">
    <property type="entry name" value="RutF"/>
    <property type="match status" value="1"/>
</dbReference>
<dbReference type="InterPro" id="IPR002563">
    <property type="entry name" value="Flavin_Rdtase-like_dom"/>
</dbReference>
<dbReference type="InterPro" id="IPR050268">
    <property type="entry name" value="NADH-dep_flavin_reductase"/>
</dbReference>
<dbReference type="InterPro" id="IPR019917">
    <property type="entry name" value="RutF"/>
</dbReference>
<dbReference type="InterPro" id="IPR012349">
    <property type="entry name" value="Split_barrel_FMN-bd"/>
</dbReference>
<dbReference type="NCBIfam" id="TIGR03615">
    <property type="entry name" value="RutF"/>
    <property type="match status" value="1"/>
</dbReference>
<dbReference type="PANTHER" id="PTHR30466">
    <property type="entry name" value="FLAVIN REDUCTASE"/>
    <property type="match status" value="1"/>
</dbReference>
<dbReference type="PANTHER" id="PTHR30466:SF1">
    <property type="entry name" value="FMN REDUCTASE (NADH) RUTF"/>
    <property type="match status" value="1"/>
</dbReference>
<dbReference type="Pfam" id="PF01613">
    <property type="entry name" value="Flavin_Reduct"/>
    <property type="match status" value="1"/>
</dbReference>
<dbReference type="SMART" id="SM00903">
    <property type="entry name" value="Flavin_Reduct"/>
    <property type="match status" value="1"/>
</dbReference>
<dbReference type="SUPFAM" id="SSF50475">
    <property type="entry name" value="FMN-binding split barrel"/>
    <property type="match status" value="1"/>
</dbReference>
<keyword id="KW-0285">Flavoprotein</keyword>
<keyword id="KW-0288">FMN</keyword>
<keyword id="KW-0520">NAD</keyword>
<keyword id="KW-0560">Oxidoreductase</keyword>
<reference key="1">
    <citation type="submission" date="2007-09" db="EMBL/GenBank/DDBJ databases">
        <title>Complete sequence of chromosome of Serratia proteamaculans 568.</title>
        <authorList>
            <consortium name="US DOE Joint Genome Institute"/>
            <person name="Copeland A."/>
            <person name="Lucas S."/>
            <person name="Lapidus A."/>
            <person name="Barry K."/>
            <person name="Glavina del Rio T."/>
            <person name="Dalin E."/>
            <person name="Tice H."/>
            <person name="Pitluck S."/>
            <person name="Chain P."/>
            <person name="Malfatti S."/>
            <person name="Shin M."/>
            <person name="Vergez L."/>
            <person name="Schmutz J."/>
            <person name="Larimer F."/>
            <person name="Land M."/>
            <person name="Hauser L."/>
            <person name="Kyrpides N."/>
            <person name="Kim E."/>
            <person name="Taghavi S."/>
            <person name="Newman L."/>
            <person name="Vangronsveld J."/>
            <person name="van der Lelie D."/>
            <person name="Richardson P."/>
        </authorList>
    </citation>
    <scope>NUCLEOTIDE SEQUENCE [LARGE SCALE GENOMIC DNA]</scope>
    <source>
        <strain>568</strain>
    </source>
</reference>
<gene>
    <name evidence="1" type="primary">rutF</name>
    <name type="ordered locus">Spro_1819</name>
</gene>